<name>SHUT_ADECC</name>
<feature type="chain" id="PRO_0000221860" description="Shutoff protein">
    <location>
        <begin position="1"/>
        <end position="689"/>
    </location>
</feature>
<feature type="domain" description="RRM" evidence="1">
    <location>
        <begin position="292"/>
        <end position="410"/>
    </location>
</feature>
<feature type="region of interest" description="Disordered" evidence="2">
    <location>
        <begin position="1"/>
        <end position="24"/>
    </location>
</feature>
<feature type="region of interest" description="Binding to host EIF4G" evidence="1">
    <location>
        <begin position="226"/>
        <end position="289"/>
    </location>
</feature>
<feature type="region of interest" description="Disordered" evidence="2">
    <location>
        <begin position="625"/>
        <end position="689"/>
    </location>
</feature>
<feature type="compositionally biased region" description="Basic and acidic residues" evidence="2">
    <location>
        <begin position="645"/>
        <end position="655"/>
    </location>
</feature>
<feature type="compositionally biased region" description="Basic residues" evidence="2">
    <location>
        <begin position="656"/>
        <end position="675"/>
    </location>
</feature>
<feature type="compositionally biased region" description="Basic and acidic residues" evidence="2">
    <location>
        <begin position="678"/>
        <end position="689"/>
    </location>
</feature>
<feature type="modified residue" description="Phosphotyrosine; by host" evidence="1">
    <location>
        <position position="309"/>
    </location>
</feature>
<feature type="modified residue" description="Phosphotyrosine; by host" evidence="1">
    <location>
        <position position="627"/>
    </location>
</feature>
<organismHost>
    <name type="scientific">Canis lupus familiaris</name>
    <name type="common">Dog</name>
    <name type="synonym">Canis familiaris</name>
    <dbReference type="NCBI Taxonomy" id="9615"/>
</organismHost>
<accession>P68966</accession>
<accession>Q65957</accession>
<gene>
    <name evidence="1" type="primary">L4</name>
</gene>
<evidence type="ECO:0000255" key="1">
    <source>
        <dbReference type="HAMAP-Rule" id="MF_04060"/>
    </source>
</evidence>
<evidence type="ECO:0000256" key="2">
    <source>
        <dbReference type="SAM" id="MobiDB-lite"/>
    </source>
</evidence>
<sequence length="689" mass="77373">MSEEPVSGTTVEIEEDTHTPPNSPVLETFSLSPEPEAEACPNTDRYLSANLLCKHLQRQSAIVLDSIKDQLQVPTSVSELSCAYERSLLCPNIPPKQQSNGTCEANPKLNFYPTFLVPETLATYHIFFVNQKIPVSCKANRAKADKALTLQEGDCLPDYETMDTVSRVFEGLGGEVVAENALQNNDSVLVELKEDNPRLAVLKRNLSVSHFAYPAVHLPPKIITTVMNNLLVKRANPSADVSELDPDGGQEVVSDTELSRWLNTSDPETLEKQRKLVMGSVLVTVVLECMQRLFTSKDMVKKIGETLHYTFRHGYVSLACKISNVELTNVVTYMGILHENRLGQTTLHHTIQGETRRDYIRDSIFLILIHTWQTAMGIWQQCLEEENLKELAKLVQKIKKPLYTETSQRLMGKQLANVVFPPKLLETFNKGLPDIVNQSMMQNFRSFILERSGILPSMTCALPTDFIPIHFKECPPTMWPYTYLLRLANFFMYHNDLCYDMEGEGLLEHYCRCNLCTPHRCLATNPAMLNETQLIGTFDIRGPGGENGAESSSGLKLTAGMWTSAFLRKFESSDYHAHKIHFYENQSKPPSVEPTPCVITQSSILAQLHDIKKAREEFLLKKGQGQYLDPHTGEPLNAAGPSVESGHEFQGDGRHREPKRGRHFRQRGGPRKPPRAHAGGEPDVRGTTS</sequence>
<proteinExistence type="inferred from homology"/>
<comment type="function">
    <text evidence="1">Protein that inhibits host translation while promoting late viral translation by ribosome shunting. Blocks host cap-dependent translation by binding to eIF4G, displacing MKNK1 from cap initiation complexes and preventing EIF4E phosphorylation. Binds to the tripartite leader sequence of viral late mRNAs and recruits host eIF4G, PABPC1/poly-A binding protein and 40S ribosomes subunits on viral mRNAs, allowing ribosome shunting and efficient translation of late viral mRNAs even though conventional translation via ribosome scanning from the cap has been shut off in the host cell. During assembly, acts as a chaperone protein that helps hexon proteins assembly into trimers.</text>
</comment>
<comment type="subunit">
    <text evidence="1">Monomer. Interacts with hexon protein; this interaction allows chaperoning and trimerization of hexon proteins. Interacts (via N-terminus) with host initiation factor EIF4G (via C-terminus). Interacts (via RRM domain) with viral mRNAs that contain the tripartite leader; this interaction allows ribosome shunting and expression of viral late mRNAs.</text>
</comment>
<comment type="subcellular location">
    <subcellularLocation>
        <location evidence="1">Host cytoplasm</location>
    </subcellularLocation>
</comment>
<comment type="induction">
    <text evidence="1">Expressed in the late phase of the viral replicative cycle.</text>
</comment>
<comment type="PTM">
    <text evidence="1">Might be cleaved by the viral protease.</text>
</comment>
<comment type="PTM">
    <text evidence="1">Phosphorylated. Tyrosine phosphorylation enhances preferential binding to tripartite leader mRNAs and allows ribosome shunting.</text>
</comment>
<comment type="PTM">
    <text evidence="1">Methylated. Asymmetric dimethylation by host PRMT1 of the Arg/Gly-rich region may regulate shutoff protein binding to hexon and promote the capsid assembly in the nucleus.</text>
</comment>
<comment type="miscellaneous">
    <text evidence="1">All late proteins expressed from the major late promoter are produced by alternative splicing and alternative polyadenylation of the same gene giving rise to non-overlapping ORFs. A leader sequence is present in the N-terminus of all these mRNAs and is recognized by the viral shutoff protein to provide expression although conventional translation via ribosome scanning from the cap has been shut off in the host cell.</text>
</comment>
<comment type="similarity">
    <text evidence="1">Belongs to the adenoviridae shutoff protein family.</text>
</comment>
<dbReference type="EMBL" id="U55001">
    <property type="protein sequence ID" value="AAB05446.1"/>
    <property type="molecule type" value="Genomic_DNA"/>
</dbReference>
<dbReference type="RefSeq" id="AP_000062.1">
    <property type="nucleotide sequence ID" value="AC_000003.1"/>
</dbReference>
<dbReference type="SMR" id="P68966"/>
<dbReference type="GO" id="GO:0043657">
    <property type="term" value="C:host cell"/>
    <property type="evidence" value="ECO:0007669"/>
    <property type="project" value="GOC"/>
</dbReference>
<dbReference type="GO" id="GO:0030430">
    <property type="term" value="C:host cell cytoplasm"/>
    <property type="evidence" value="ECO:0007669"/>
    <property type="project" value="UniProtKB-SubCell"/>
</dbReference>
<dbReference type="GO" id="GO:0003723">
    <property type="term" value="F:RNA binding"/>
    <property type="evidence" value="ECO:0007669"/>
    <property type="project" value="UniProtKB-UniRule"/>
</dbReference>
<dbReference type="GO" id="GO:0019060">
    <property type="term" value="P:intracellular transport of viral protein in host cell"/>
    <property type="evidence" value="ECO:0007669"/>
    <property type="project" value="UniProtKB-UniRule"/>
</dbReference>
<dbReference type="GO" id="GO:0039657">
    <property type="term" value="P:symbiont-mediated suppression of host gene expression"/>
    <property type="evidence" value="ECO:0007669"/>
    <property type="project" value="UniProtKB-UniRule"/>
</dbReference>
<dbReference type="GO" id="GO:0039606">
    <property type="term" value="P:symbiont-mediated suppression of host translation initiation"/>
    <property type="evidence" value="ECO:0007669"/>
    <property type="project" value="UniProtKB-KW"/>
</dbReference>
<dbReference type="GO" id="GO:0039704">
    <property type="term" value="P:viral translational shunt"/>
    <property type="evidence" value="ECO:0000250"/>
    <property type="project" value="UniProtKB"/>
</dbReference>
<dbReference type="HAMAP" id="MF_04060">
    <property type="entry name" value="ADV_SHUT"/>
    <property type="match status" value="1"/>
</dbReference>
<dbReference type="InterPro" id="IPR003381">
    <property type="entry name" value="L4"/>
</dbReference>
<dbReference type="Pfam" id="PF02438">
    <property type="entry name" value="Adeno_100"/>
    <property type="match status" value="1"/>
</dbReference>
<organism>
    <name type="scientific">Canine adenovirus serotype 1 (strain CLL)</name>
    <name type="common">CAdV-1</name>
    <name type="synonym">Canine adenovirus 1 (strain CLL)</name>
    <dbReference type="NCBI Taxonomy" id="69150"/>
    <lineage>
        <taxon>Viruses</taxon>
        <taxon>Varidnaviria</taxon>
        <taxon>Bamfordvirae</taxon>
        <taxon>Preplasmiviricota</taxon>
        <taxon>Tectiliviricetes</taxon>
        <taxon>Rowavirales</taxon>
        <taxon>Adenoviridae</taxon>
        <taxon>Mastadenovirus</taxon>
        <taxon>Canine mastadenovirus A</taxon>
    </lineage>
</organism>
<keyword id="KW-0143">Chaperone</keyword>
<keyword id="KW-1262">Eukaryotic host gene expression shutoff by virus</keyword>
<keyword id="KW-1193">Eukaryotic host translation shutoff by virus</keyword>
<keyword id="KW-1035">Host cytoplasm</keyword>
<keyword id="KW-1190">Host gene expression shutoff by virus</keyword>
<keyword id="KW-0945">Host-virus interaction</keyword>
<keyword id="KW-1075">Inhibition of eukaryotic host translation factors by virus</keyword>
<keyword id="KW-0426">Late protein</keyword>
<keyword id="KW-0488">Methylation</keyword>
<keyword id="KW-0597">Phosphoprotein</keyword>
<keyword id="KW-0694">RNA-binding</keyword>
<keyword id="KW-1155">Translational shunt</keyword>
<keyword id="KW-0813">Transport</keyword>
<protein>
    <recommendedName>
        <fullName evidence="1">Shutoff protein</fullName>
    </recommendedName>
    <alternativeName>
        <fullName evidence="1">100 kDa protein</fullName>
        <shortName evidence="1">p100K</shortName>
    </alternativeName>
    <alternativeName>
        <fullName evidence="1">100K-chaperone protein</fullName>
    </alternativeName>
    <alternativeName>
        <fullName evidence="1">L4-100K</fullName>
    </alternativeName>
    <alternativeName>
        <fullName evidence="1">Shutoff protein 100K</fullName>
    </alternativeName>
</protein>
<reference key="1">
    <citation type="submission" date="1996-08" db="EMBL/GenBank/DDBJ databases">
        <title>DNA sequence and genomic organization of canine adenovirus type 1.</title>
        <authorList>
            <person name="Campbell J.B."/>
            <person name="Zhao Y."/>
        </authorList>
    </citation>
    <scope>NUCLEOTIDE SEQUENCE [LARGE SCALE GENOMIC DNA]</scope>
</reference>